<organism>
    <name type="scientific">Kali turgidum</name>
    <name type="common">Prickly saltwort</name>
    <name type="synonym">Salsola kali</name>
    <dbReference type="NCBI Taxonomy" id="151250"/>
    <lineage>
        <taxon>Eukaryota</taxon>
        <taxon>Viridiplantae</taxon>
        <taxon>Streptophyta</taxon>
        <taxon>Embryophyta</taxon>
        <taxon>Tracheophyta</taxon>
        <taxon>Spermatophyta</taxon>
        <taxon>Magnoliopsida</taxon>
        <taxon>eudicotyledons</taxon>
        <taxon>Gunneridae</taxon>
        <taxon>Pentapetalae</taxon>
        <taxon>Caryophyllales</taxon>
        <taxon>Chenopodiaceae</taxon>
        <taxon>Salsoloideae</taxon>
        <taxon>Salsoleae</taxon>
        <taxon>Kali</taxon>
    </lineage>
</organism>
<evidence type="ECO:0000250" key="1">
    <source>
        <dbReference type="UniProtKB" id="O74213"/>
    </source>
</evidence>
<evidence type="ECO:0000255" key="2"/>
<evidence type="ECO:0000255" key="3">
    <source>
        <dbReference type="PROSITE-ProRule" id="PRU00498"/>
    </source>
</evidence>
<evidence type="ECO:0000255" key="4">
    <source>
        <dbReference type="PROSITE-ProRule" id="PRU10052"/>
    </source>
</evidence>
<evidence type="ECO:0000269" key="5">
    <source>
    </source>
</evidence>
<evidence type="ECO:0000303" key="6">
    <source>
    </source>
</evidence>
<evidence type="ECO:0000305" key="7"/>
<sequence>MKTFNLPLLVALFYLFVSVARSQGPIDITKFGAKPNADATSALLAAWKEACAAAAPAKIVVPAGEFLLNAVKLQGPCKAPLTIEIAGNFKAPADVAQMKGEDTWVKIENVQGLTITCLPTGGTFDGQGQAAWKQNKCAQSGMCNSLPYNFRFNTLTNAQISGIKSLNSKLYHMGVMGCKNITLTGLTIDAPKDSLNTDGMHIGRSNGVHATNSKIGTGDDCISMGDGAVDVHVEGITCGPGHGISIGSMGKFANEAPNTGIFVKNCSFTDTDNGVRIKSWMNSFEASASDLHFEDITVTNVLNPVIIDQEYCPYNHCKEKTPSKVKLSKISFKNVHGAAKSAEVVKLLCSSAVPCDGVELADIDLTFPGGAAVSQCKNVKPIVTGKQNPVACGAPATPAAP</sequence>
<comment type="function">
    <text evidence="7">May function in depolymerizing pectin during pollen development, germination, and tube growth. Acts as an exo-polygalacturonase.</text>
</comment>
<comment type="catalytic activity">
    <reaction evidence="7">
        <text>[(1-&gt;4)-alpha-D-galacturonosyl](n) + H2O = alpha-D-galacturonate + [(1-&gt;4)-alpha-D-galacturonosyl](n-1)</text>
        <dbReference type="Rhea" id="RHEA:14117"/>
        <dbReference type="Rhea" id="RHEA-COMP:14570"/>
        <dbReference type="Rhea" id="RHEA-COMP:14572"/>
        <dbReference type="ChEBI" id="CHEBI:15377"/>
        <dbReference type="ChEBI" id="CHEBI:58658"/>
        <dbReference type="ChEBI" id="CHEBI:140523"/>
        <dbReference type="EC" id="3.2.1.67"/>
    </reaction>
</comment>
<comment type="subcellular location">
    <subcellularLocation>
        <location>Secreted</location>
    </subcellularLocation>
    <subcellularLocation>
        <location evidence="7">Secreted</location>
        <location evidence="7">Cell wall</location>
    </subcellularLocation>
</comment>
<comment type="allergen">
    <text evidence="5">Causes an allergic reaction in human. Binds to IgE. Induces basophil activation from blood of S.kali pollen-sensitized patients.</text>
</comment>
<comment type="similarity">
    <text evidence="7">Belongs to the glycosyl hydrolase 28 family.</text>
</comment>
<protein>
    <recommendedName>
        <fullName evidence="7">Probable galacturan 1,4-alpha-galacturonidase SALK6</fullName>
        <ecNumber evidence="7">3.2.1.67</ecNumber>
    </recommendedName>
    <alternativeName>
        <fullName evidence="7">Exopolygalacturonase SALK6</fullName>
    </alternativeName>
    <alternativeName>
        <fullName evidence="6">Pollen allergen Sal k 6</fullName>
    </alternativeName>
    <allergenName evidence="6">Sal k 6</allergenName>
</protein>
<reference key="1">
    <citation type="journal article" date="2017" name="Biochim. Biophys. Acta">
        <title>A relevant IgE-reactive 28kDa protein identified from Salsola kali pollen extract by proteomics is a natural degradation product of an integral 47kDa polygalaturonase.</title>
        <authorList>
            <person name="Mas S."/>
            <person name="Oeo-Santos C."/>
            <person name="Cuesta-Herranz J."/>
            <person name="Diaz-Perales A."/>
            <person name="Colas C."/>
            <person name="Fernandez J."/>
            <person name="Barber D."/>
            <person name="Rodriguez R."/>
            <person name="de Los Rios V."/>
            <person name="Barderas R."/>
            <person name="Villalba M."/>
        </authorList>
    </citation>
    <scope>NUCLEOTIDE SEQUENCE [MRNA]</scope>
    <scope>IDENTIFICATION BY MASS SPECTROMETRY</scope>
    <scope>ALLERGEN</scope>
    <source>
        <tissue>Pollen</tissue>
    </source>
</reference>
<name>SALK6_KALTU</name>
<dbReference type="EC" id="3.2.1.67" evidence="7"/>
<dbReference type="EMBL" id="KC920919">
    <property type="protein sequence ID" value="AHL24657.2"/>
    <property type="molecule type" value="mRNA"/>
</dbReference>
<dbReference type="EMBL" id="KY883988">
    <property type="protein sequence ID" value="ARS33724.1"/>
    <property type="molecule type" value="mRNA"/>
</dbReference>
<dbReference type="SMR" id="W8P8Q3"/>
<dbReference type="GO" id="GO:0005576">
    <property type="term" value="C:extracellular region"/>
    <property type="evidence" value="ECO:0007669"/>
    <property type="project" value="UniProtKB-SubCell"/>
</dbReference>
<dbReference type="GO" id="GO:0047911">
    <property type="term" value="F:galacturan 1,4-alpha-galacturonidase activity"/>
    <property type="evidence" value="ECO:0007669"/>
    <property type="project" value="UniProtKB-EC"/>
</dbReference>
<dbReference type="GO" id="GO:0004650">
    <property type="term" value="F:polygalacturonase activity"/>
    <property type="evidence" value="ECO:0007669"/>
    <property type="project" value="InterPro"/>
</dbReference>
<dbReference type="GO" id="GO:0005975">
    <property type="term" value="P:carbohydrate metabolic process"/>
    <property type="evidence" value="ECO:0007669"/>
    <property type="project" value="InterPro"/>
</dbReference>
<dbReference type="GO" id="GO:0071555">
    <property type="term" value="P:cell wall organization"/>
    <property type="evidence" value="ECO:0007669"/>
    <property type="project" value="UniProtKB-KW"/>
</dbReference>
<dbReference type="FunFam" id="2.160.20.10:FF:000004">
    <property type="entry name" value="Pectin lyase-like superfamily protein"/>
    <property type="match status" value="1"/>
</dbReference>
<dbReference type="Gene3D" id="2.160.20.10">
    <property type="entry name" value="Single-stranded right-handed beta-helix, Pectin lyase-like"/>
    <property type="match status" value="1"/>
</dbReference>
<dbReference type="InterPro" id="IPR000743">
    <property type="entry name" value="Glyco_hydro_28"/>
</dbReference>
<dbReference type="InterPro" id="IPR006626">
    <property type="entry name" value="PbH1"/>
</dbReference>
<dbReference type="InterPro" id="IPR012334">
    <property type="entry name" value="Pectin_lyas_fold"/>
</dbReference>
<dbReference type="InterPro" id="IPR011050">
    <property type="entry name" value="Pectin_lyase_fold/virulence"/>
</dbReference>
<dbReference type="PANTHER" id="PTHR31375">
    <property type="match status" value="1"/>
</dbReference>
<dbReference type="Pfam" id="PF00295">
    <property type="entry name" value="Glyco_hydro_28"/>
    <property type="match status" value="1"/>
</dbReference>
<dbReference type="SMART" id="SM00710">
    <property type="entry name" value="PbH1"/>
    <property type="match status" value="5"/>
</dbReference>
<dbReference type="SUPFAM" id="SSF51126">
    <property type="entry name" value="Pectin lyase-like"/>
    <property type="match status" value="1"/>
</dbReference>
<dbReference type="PROSITE" id="PS00502">
    <property type="entry name" value="POLYGALACTURONASE"/>
    <property type="match status" value="1"/>
</dbReference>
<keyword id="KW-0020">Allergen</keyword>
<keyword id="KW-0134">Cell wall</keyword>
<keyword id="KW-0961">Cell wall biogenesis/degradation</keyword>
<keyword id="KW-1015">Disulfide bond</keyword>
<keyword id="KW-0325">Glycoprotein</keyword>
<keyword id="KW-0326">Glycosidase</keyword>
<keyword id="KW-0378">Hydrolase</keyword>
<keyword id="KW-0964">Secreted</keyword>
<keyword id="KW-0732">Signal</keyword>
<proteinExistence type="evidence at protein level"/>
<feature type="signal peptide" evidence="2">
    <location>
        <begin position="1"/>
        <end position="22"/>
    </location>
</feature>
<feature type="chain" id="PRO_0000441331" description="Probable galacturan 1,4-alpha-galacturonidase SALK6">
    <location>
        <begin position="23"/>
        <end position="401"/>
    </location>
</feature>
<feature type="active site" description="Proton donor" evidence="1">
    <location>
        <position position="219"/>
    </location>
</feature>
<feature type="active site" evidence="4">
    <location>
        <position position="242"/>
    </location>
</feature>
<feature type="glycosylation site" description="N-linked (GlcNAc...) asparagine" evidence="3">
    <location>
        <position position="180"/>
    </location>
</feature>
<feature type="glycosylation site" description="N-linked (GlcNAc...) asparagine" evidence="3">
    <location>
        <position position="265"/>
    </location>
</feature>
<feature type="disulfide bond" evidence="1">
    <location>
        <begin position="221"/>
        <end position="238"/>
    </location>
</feature>
<feature type="disulfide bond" evidence="1">
    <location>
        <begin position="349"/>
        <end position="355"/>
    </location>
</feature>
<feature type="disulfide bond" evidence="1">
    <location>
        <begin position="376"/>
        <end position="392"/>
    </location>
</feature>
<accession>W8P8Q3</accession>
<accession>A0A1X9YLN9</accession>